<evidence type="ECO:0000255" key="1">
    <source>
        <dbReference type="HAMAP-Rule" id="MF_00068"/>
    </source>
</evidence>
<sequence>MQLEKMITEGSNTASAEIDRVSTLEMCRIINDEDKTVPLAVDRVLPDIAAAIDVIHAQVSGGGRLIYLGAGTSGRLGILDASECPPTYGVKPGLVVGLIAGGEYAIQHAVEGAEDSREGGVNDLKNINLTAQDVVVGIAASGRTPYVIAGLEYARQLGCRTVGISCNPGSAVSTTAEFAITPIVGAEVVTGSSRMKAGTAQKLVLNMLSTGLMIKSGKVFGNLMVDVVATNEKLHVRQVNIVKNATGCNAEQAEAALIACERNCKTAIVMVLKNLDAAEAKKRLDQHGGFIRQVLDKE</sequence>
<proteinExistence type="inferred from homology"/>
<gene>
    <name evidence="1" type="primary">murQ</name>
    <name type="ordered locus">SFV_2481</name>
</gene>
<dbReference type="EC" id="4.2.1.126" evidence="1"/>
<dbReference type="EMBL" id="CP000266">
    <property type="protein sequence ID" value="ABF04585.1"/>
    <property type="molecule type" value="Genomic_DNA"/>
</dbReference>
<dbReference type="RefSeq" id="WP_001175640.1">
    <property type="nucleotide sequence ID" value="NC_008258.1"/>
</dbReference>
<dbReference type="SMR" id="Q0T280"/>
<dbReference type="KEGG" id="sfv:SFV_2481"/>
<dbReference type="HOGENOM" id="CLU_049049_1_1_6"/>
<dbReference type="UniPathway" id="UPA00342"/>
<dbReference type="UniPathway" id="UPA00343"/>
<dbReference type="UniPathway" id="UPA00544"/>
<dbReference type="Proteomes" id="UP000000659">
    <property type="component" value="Chromosome"/>
</dbReference>
<dbReference type="GO" id="GO:0097367">
    <property type="term" value="F:carbohydrate derivative binding"/>
    <property type="evidence" value="ECO:0007669"/>
    <property type="project" value="InterPro"/>
</dbReference>
<dbReference type="GO" id="GO:0016835">
    <property type="term" value="F:carbon-oxygen lyase activity"/>
    <property type="evidence" value="ECO:0007669"/>
    <property type="project" value="UniProtKB-UniRule"/>
</dbReference>
<dbReference type="GO" id="GO:0016803">
    <property type="term" value="F:ether hydrolase activity"/>
    <property type="evidence" value="ECO:0007669"/>
    <property type="project" value="TreeGrafter"/>
</dbReference>
<dbReference type="GO" id="GO:0097175">
    <property type="term" value="P:1,6-anhydro-N-acetyl-beta-muramic acid catabolic process"/>
    <property type="evidence" value="ECO:0007669"/>
    <property type="project" value="UniProtKB-UniRule"/>
</dbReference>
<dbReference type="GO" id="GO:0046348">
    <property type="term" value="P:amino sugar catabolic process"/>
    <property type="evidence" value="ECO:0007669"/>
    <property type="project" value="InterPro"/>
</dbReference>
<dbReference type="GO" id="GO:0097173">
    <property type="term" value="P:N-acetylmuramic acid catabolic process"/>
    <property type="evidence" value="ECO:0007669"/>
    <property type="project" value="UniProtKB-UniPathway"/>
</dbReference>
<dbReference type="GO" id="GO:0009254">
    <property type="term" value="P:peptidoglycan turnover"/>
    <property type="evidence" value="ECO:0007669"/>
    <property type="project" value="UniProtKB-UniRule"/>
</dbReference>
<dbReference type="CDD" id="cd05007">
    <property type="entry name" value="SIS_Etherase"/>
    <property type="match status" value="1"/>
</dbReference>
<dbReference type="FunFam" id="1.10.8.1080:FF:000001">
    <property type="entry name" value="N-acetylmuramic acid 6-phosphate etherase"/>
    <property type="match status" value="1"/>
</dbReference>
<dbReference type="FunFam" id="3.40.50.10490:FF:000014">
    <property type="entry name" value="N-acetylmuramic acid 6-phosphate etherase"/>
    <property type="match status" value="1"/>
</dbReference>
<dbReference type="Gene3D" id="1.10.8.1080">
    <property type="match status" value="1"/>
</dbReference>
<dbReference type="Gene3D" id="3.40.50.10490">
    <property type="entry name" value="Glucose-6-phosphate isomerase like protein, domain 1"/>
    <property type="match status" value="1"/>
</dbReference>
<dbReference type="HAMAP" id="MF_00068">
    <property type="entry name" value="MurQ"/>
    <property type="match status" value="1"/>
</dbReference>
<dbReference type="InterPro" id="IPR005488">
    <property type="entry name" value="Etherase_MurQ"/>
</dbReference>
<dbReference type="InterPro" id="IPR005486">
    <property type="entry name" value="Glucokinase_regulatory_CS"/>
</dbReference>
<dbReference type="InterPro" id="IPR040190">
    <property type="entry name" value="MURQ/GCKR"/>
</dbReference>
<dbReference type="InterPro" id="IPR001347">
    <property type="entry name" value="SIS_dom"/>
</dbReference>
<dbReference type="InterPro" id="IPR046348">
    <property type="entry name" value="SIS_dom_sf"/>
</dbReference>
<dbReference type="NCBIfam" id="TIGR00274">
    <property type="entry name" value="N-acetylmuramic acid 6-phosphate etherase"/>
    <property type="match status" value="1"/>
</dbReference>
<dbReference type="NCBIfam" id="NF003915">
    <property type="entry name" value="PRK05441.1"/>
    <property type="match status" value="1"/>
</dbReference>
<dbReference type="NCBIfam" id="NF009222">
    <property type="entry name" value="PRK12570.1"/>
    <property type="match status" value="1"/>
</dbReference>
<dbReference type="PANTHER" id="PTHR10088">
    <property type="entry name" value="GLUCOKINASE REGULATORY PROTEIN"/>
    <property type="match status" value="1"/>
</dbReference>
<dbReference type="PANTHER" id="PTHR10088:SF4">
    <property type="entry name" value="GLUCOKINASE REGULATORY PROTEIN"/>
    <property type="match status" value="1"/>
</dbReference>
<dbReference type="Pfam" id="PF22645">
    <property type="entry name" value="GKRP_SIS_N"/>
    <property type="match status" value="1"/>
</dbReference>
<dbReference type="SUPFAM" id="SSF53697">
    <property type="entry name" value="SIS domain"/>
    <property type="match status" value="1"/>
</dbReference>
<dbReference type="PROSITE" id="PS01272">
    <property type="entry name" value="GCKR"/>
    <property type="match status" value="1"/>
</dbReference>
<dbReference type="PROSITE" id="PS51464">
    <property type="entry name" value="SIS"/>
    <property type="match status" value="1"/>
</dbReference>
<protein>
    <recommendedName>
        <fullName evidence="1">N-acetylmuramic acid 6-phosphate etherase</fullName>
        <shortName evidence="1">MurNAc-6-P etherase</shortName>
        <ecNumber evidence="1">4.2.1.126</ecNumber>
    </recommendedName>
    <alternativeName>
        <fullName evidence="1">N-acetylmuramic acid 6-phosphate hydrolase</fullName>
    </alternativeName>
    <alternativeName>
        <fullName evidence="1">N-acetylmuramic acid 6-phosphate lyase</fullName>
    </alternativeName>
</protein>
<accession>Q0T280</accession>
<comment type="function">
    <text evidence="1">Specifically catalyzes the cleavage of the D-lactyl ether substituent of MurNAc 6-phosphate, producing GlcNAc 6-phosphate and D-lactate. Together with AnmK, is also required for the utilization of anhydro-N-acetylmuramic acid (anhMurNAc) either imported from the medium or derived from its own cell wall murein, and thus plays a role in cell wall recycling.</text>
</comment>
<comment type="catalytic activity">
    <reaction evidence="1">
        <text>N-acetyl-D-muramate 6-phosphate + H2O = N-acetyl-D-glucosamine 6-phosphate + (R)-lactate</text>
        <dbReference type="Rhea" id="RHEA:26410"/>
        <dbReference type="ChEBI" id="CHEBI:15377"/>
        <dbReference type="ChEBI" id="CHEBI:16004"/>
        <dbReference type="ChEBI" id="CHEBI:57513"/>
        <dbReference type="ChEBI" id="CHEBI:58722"/>
        <dbReference type="EC" id="4.2.1.126"/>
    </reaction>
</comment>
<comment type="pathway">
    <text evidence="1">Amino-sugar metabolism; 1,6-anhydro-N-acetylmuramate degradation.</text>
</comment>
<comment type="pathway">
    <text evidence="1">Amino-sugar metabolism; N-acetylmuramate degradation.</text>
</comment>
<comment type="pathway">
    <text evidence="1">Cell wall biogenesis; peptidoglycan recycling.</text>
</comment>
<comment type="subunit">
    <text evidence="1">Homodimer.</text>
</comment>
<comment type="induction">
    <text evidence="1">Induced by MurNAc 6-phosphate that releases the repressor MurR from the DNA. Repressed by MurR in the absence of MurNAc 6-phosphate.</text>
</comment>
<comment type="miscellaneous">
    <text evidence="1">A lyase-type mechanism (elimination/hydration) is suggested for the cleavage of the lactyl ether bond of MurNAc 6-phosphate, with the formation of an alpha,beta-unsaturated aldehyde intermediate with (E)-stereochemistry, followed by the syn addition of water to give product.</text>
</comment>
<comment type="similarity">
    <text evidence="1">Belongs to the GCKR-like family. MurNAc-6-P etherase subfamily.</text>
</comment>
<keyword id="KW-0119">Carbohydrate metabolism</keyword>
<keyword id="KW-0456">Lyase</keyword>
<name>MURQ_SHIF8</name>
<feature type="chain" id="PRO_1000009132" description="N-acetylmuramic acid 6-phosphate etherase">
    <location>
        <begin position="1"/>
        <end position="298"/>
    </location>
</feature>
<feature type="domain" description="SIS" evidence="1">
    <location>
        <begin position="55"/>
        <end position="218"/>
    </location>
</feature>
<feature type="active site" description="Proton donor" evidence="1">
    <location>
        <position position="83"/>
    </location>
</feature>
<feature type="active site" evidence="1">
    <location>
        <position position="114"/>
    </location>
</feature>
<organism>
    <name type="scientific">Shigella flexneri serotype 5b (strain 8401)</name>
    <dbReference type="NCBI Taxonomy" id="373384"/>
    <lineage>
        <taxon>Bacteria</taxon>
        <taxon>Pseudomonadati</taxon>
        <taxon>Pseudomonadota</taxon>
        <taxon>Gammaproteobacteria</taxon>
        <taxon>Enterobacterales</taxon>
        <taxon>Enterobacteriaceae</taxon>
        <taxon>Shigella</taxon>
    </lineage>
</organism>
<reference key="1">
    <citation type="journal article" date="2006" name="BMC Genomics">
        <title>Complete genome sequence of Shigella flexneri 5b and comparison with Shigella flexneri 2a.</title>
        <authorList>
            <person name="Nie H."/>
            <person name="Yang F."/>
            <person name="Zhang X."/>
            <person name="Yang J."/>
            <person name="Chen L."/>
            <person name="Wang J."/>
            <person name="Xiong Z."/>
            <person name="Peng J."/>
            <person name="Sun L."/>
            <person name="Dong J."/>
            <person name="Xue Y."/>
            <person name="Xu X."/>
            <person name="Chen S."/>
            <person name="Yao Z."/>
            <person name="Shen Y."/>
            <person name="Jin Q."/>
        </authorList>
    </citation>
    <scope>NUCLEOTIDE SEQUENCE [LARGE SCALE GENOMIC DNA]</scope>
    <source>
        <strain>8401</strain>
    </source>
</reference>